<gene>
    <name evidence="1" type="primary">bioB</name>
    <name type="ordered locus">FTH_1245</name>
</gene>
<sequence length="313" mass="34906">MTLQQIKEIYLRPLTELILKALEIHNKNFGNDIELCSLKSIKTGTCPEDCKYCPQSGHYNTSIEKHKLLDKDSILAEAKNAKDAGSKRFCMGAAWKHIPKKDFDQVAEIITEVKNLGLETCVTLGSINADEATKLKQAGLDYYNHNLDTSREFYPEIITTRKFEERIETIRNVANANINVCCGGILGMGESLDDRFNLLLELLQLPAAPKSIPINTLIPVKGTPLGDKYTNAQIDSFELVRFIATTRILFPQARLRLSAGRENMSLETQTLCFLAGINSIFYGNKLLTENNATVNSDNFLLAKLGLKSNAELC</sequence>
<proteinExistence type="inferred from homology"/>
<reference key="1">
    <citation type="journal article" date="2006" name="J. Bacteriol.">
        <title>Chromosome rearrangement and diversification of Francisella tularensis revealed by the type B (OSU18) genome sequence.</title>
        <authorList>
            <person name="Petrosino J.F."/>
            <person name="Xiang Q."/>
            <person name="Karpathy S.E."/>
            <person name="Jiang H."/>
            <person name="Yerrapragada S."/>
            <person name="Liu Y."/>
            <person name="Gioia J."/>
            <person name="Hemphill L."/>
            <person name="Gonzalez A."/>
            <person name="Raghavan T.M."/>
            <person name="Uzman A."/>
            <person name="Fox G.E."/>
            <person name="Highlander S."/>
            <person name="Reichard M."/>
            <person name="Morton R.J."/>
            <person name="Clinkenbeard K.D."/>
            <person name="Weinstock G.M."/>
        </authorList>
    </citation>
    <scope>NUCLEOTIDE SEQUENCE [LARGE SCALE GENOMIC DNA]</scope>
    <source>
        <strain>OSU18</strain>
    </source>
</reference>
<organism>
    <name type="scientific">Francisella tularensis subsp. holarctica (strain OSU18)</name>
    <dbReference type="NCBI Taxonomy" id="393011"/>
    <lineage>
        <taxon>Bacteria</taxon>
        <taxon>Pseudomonadati</taxon>
        <taxon>Pseudomonadota</taxon>
        <taxon>Gammaproteobacteria</taxon>
        <taxon>Thiotrichales</taxon>
        <taxon>Francisellaceae</taxon>
        <taxon>Francisella</taxon>
    </lineage>
</organism>
<feature type="chain" id="PRO_0000381396" description="Biotin synthase">
    <location>
        <begin position="1"/>
        <end position="313"/>
    </location>
</feature>
<feature type="domain" description="Radical SAM core" evidence="2">
    <location>
        <begin position="28"/>
        <end position="258"/>
    </location>
</feature>
<feature type="binding site" evidence="1">
    <location>
        <position position="46"/>
    </location>
    <ligand>
        <name>[4Fe-4S] cluster</name>
        <dbReference type="ChEBI" id="CHEBI:49883"/>
        <note>4Fe-4S-S-AdoMet</note>
    </ligand>
</feature>
<feature type="binding site" evidence="1">
    <location>
        <position position="50"/>
    </location>
    <ligand>
        <name>[4Fe-4S] cluster</name>
        <dbReference type="ChEBI" id="CHEBI:49883"/>
        <note>4Fe-4S-S-AdoMet</note>
    </ligand>
</feature>
<feature type="binding site" evidence="1">
    <location>
        <position position="53"/>
    </location>
    <ligand>
        <name>[4Fe-4S] cluster</name>
        <dbReference type="ChEBI" id="CHEBI:49883"/>
        <note>4Fe-4S-S-AdoMet</note>
    </ligand>
</feature>
<feature type="binding site" evidence="1">
    <location>
        <position position="90"/>
    </location>
    <ligand>
        <name>[2Fe-2S] cluster</name>
        <dbReference type="ChEBI" id="CHEBI:190135"/>
    </ligand>
</feature>
<feature type="binding site" evidence="1">
    <location>
        <position position="121"/>
    </location>
    <ligand>
        <name>[2Fe-2S] cluster</name>
        <dbReference type="ChEBI" id="CHEBI:190135"/>
    </ligand>
</feature>
<feature type="binding site" evidence="1">
    <location>
        <position position="181"/>
    </location>
    <ligand>
        <name>[2Fe-2S] cluster</name>
        <dbReference type="ChEBI" id="CHEBI:190135"/>
    </ligand>
</feature>
<feature type="binding site" evidence="1">
    <location>
        <position position="256"/>
    </location>
    <ligand>
        <name>[2Fe-2S] cluster</name>
        <dbReference type="ChEBI" id="CHEBI:190135"/>
    </ligand>
</feature>
<dbReference type="EC" id="2.8.1.6" evidence="1"/>
<dbReference type="EMBL" id="CP000437">
    <property type="protein sequence ID" value="ABI83099.1"/>
    <property type="molecule type" value="Genomic_DNA"/>
</dbReference>
<dbReference type="RefSeq" id="WP_003016407.1">
    <property type="nucleotide sequence ID" value="NC_017463.1"/>
</dbReference>
<dbReference type="SMR" id="Q0BLD5"/>
<dbReference type="KEGG" id="fth:FTH_1245"/>
<dbReference type="UniPathway" id="UPA00078">
    <property type="reaction ID" value="UER00162"/>
</dbReference>
<dbReference type="GO" id="GO:0051537">
    <property type="term" value="F:2 iron, 2 sulfur cluster binding"/>
    <property type="evidence" value="ECO:0007669"/>
    <property type="project" value="UniProtKB-KW"/>
</dbReference>
<dbReference type="GO" id="GO:0051539">
    <property type="term" value="F:4 iron, 4 sulfur cluster binding"/>
    <property type="evidence" value="ECO:0007669"/>
    <property type="project" value="UniProtKB-KW"/>
</dbReference>
<dbReference type="GO" id="GO:0004076">
    <property type="term" value="F:biotin synthase activity"/>
    <property type="evidence" value="ECO:0007669"/>
    <property type="project" value="UniProtKB-UniRule"/>
</dbReference>
<dbReference type="GO" id="GO:0005506">
    <property type="term" value="F:iron ion binding"/>
    <property type="evidence" value="ECO:0007669"/>
    <property type="project" value="UniProtKB-UniRule"/>
</dbReference>
<dbReference type="GO" id="GO:0009102">
    <property type="term" value="P:biotin biosynthetic process"/>
    <property type="evidence" value="ECO:0007669"/>
    <property type="project" value="UniProtKB-UniRule"/>
</dbReference>
<dbReference type="CDD" id="cd01335">
    <property type="entry name" value="Radical_SAM"/>
    <property type="match status" value="1"/>
</dbReference>
<dbReference type="Gene3D" id="3.20.20.70">
    <property type="entry name" value="Aldolase class I"/>
    <property type="match status" value="1"/>
</dbReference>
<dbReference type="HAMAP" id="MF_01694">
    <property type="entry name" value="BioB"/>
    <property type="match status" value="1"/>
</dbReference>
<dbReference type="InterPro" id="IPR013785">
    <property type="entry name" value="Aldolase_TIM"/>
</dbReference>
<dbReference type="InterPro" id="IPR010722">
    <property type="entry name" value="BATS_dom"/>
</dbReference>
<dbReference type="InterPro" id="IPR002684">
    <property type="entry name" value="Biotin_synth/BioAB"/>
</dbReference>
<dbReference type="InterPro" id="IPR024177">
    <property type="entry name" value="Biotin_synthase"/>
</dbReference>
<dbReference type="InterPro" id="IPR006638">
    <property type="entry name" value="Elp3/MiaA/NifB-like_rSAM"/>
</dbReference>
<dbReference type="InterPro" id="IPR007197">
    <property type="entry name" value="rSAM"/>
</dbReference>
<dbReference type="NCBIfam" id="TIGR00433">
    <property type="entry name" value="bioB"/>
    <property type="match status" value="1"/>
</dbReference>
<dbReference type="PANTHER" id="PTHR22976">
    <property type="entry name" value="BIOTIN SYNTHASE"/>
    <property type="match status" value="1"/>
</dbReference>
<dbReference type="PANTHER" id="PTHR22976:SF2">
    <property type="entry name" value="BIOTIN SYNTHASE, MITOCHONDRIAL"/>
    <property type="match status" value="1"/>
</dbReference>
<dbReference type="Pfam" id="PF06968">
    <property type="entry name" value="BATS"/>
    <property type="match status" value="1"/>
</dbReference>
<dbReference type="Pfam" id="PF04055">
    <property type="entry name" value="Radical_SAM"/>
    <property type="match status" value="1"/>
</dbReference>
<dbReference type="PIRSF" id="PIRSF001619">
    <property type="entry name" value="Biotin_synth"/>
    <property type="match status" value="1"/>
</dbReference>
<dbReference type="SFLD" id="SFLDF00272">
    <property type="entry name" value="biotin_synthase"/>
    <property type="match status" value="1"/>
</dbReference>
<dbReference type="SFLD" id="SFLDS00029">
    <property type="entry name" value="Radical_SAM"/>
    <property type="match status" value="1"/>
</dbReference>
<dbReference type="SMART" id="SM00876">
    <property type="entry name" value="BATS"/>
    <property type="match status" value="1"/>
</dbReference>
<dbReference type="SMART" id="SM00729">
    <property type="entry name" value="Elp3"/>
    <property type="match status" value="1"/>
</dbReference>
<dbReference type="SUPFAM" id="SSF102114">
    <property type="entry name" value="Radical SAM enzymes"/>
    <property type="match status" value="1"/>
</dbReference>
<dbReference type="PROSITE" id="PS51918">
    <property type="entry name" value="RADICAL_SAM"/>
    <property type="match status" value="1"/>
</dbReference>
<comment type="function">
    <text evidence="1">Catalyzes the conversion of dethiobiotin (DTB) to biotin by the insertion of a sulfur atom into dethiobiotin via a radical-based mechanism.</text>
</comment>
<comment type="catalytic activity">
    <reaction evidence="1">
        <text>(4R,5S)-dethiobiotin + (sulfur carrier)-SH + 2 reduced [2Fe-2S]-[ferredoxin] + 2 S-adenosyl-L-methionine = (sulfur carrier)-H + biotin + 2 5'-deoxyadenosine + 2 L-methionine + 2 oxidized [2Fe-2S]-[ferredoxin]</text>
        <dbReference type="Rhea" id="RHEA:22060"/>
        <dbReference type="Rhea" id="RHEA-COMP:10000"/>
        <dbReference type="Rhea" id="RHEA-COMP:10001"/>
        <dbReference type="Rhea" id="RHEA-COMP:14737"/>
        <dbReference type="Rhea" id="RHEA-COMP:14739"/>
        <dbReference type="ChEBI" id="CHEBI:17319"/>
        <dbReference type="ChEBI" id="CHEBI:29917"/>
        <dbReference type="ChEBI" id="CHEBI:33737"/>
        <dbReference type="ChEBI" id="CHEBI:33738"/>
        <dbReference type="ChEBI" id="CHEBI:57586"/>
        <dbReference type="ChEBI" id="CHEBI:57844"/>
        <dbReference type="ChEBI" id="CHEBI:59789"/>
        <dbReference type="ChEBI" id="CHEBI:64428"/>
        <dbReference type="ChEBI" id="CHEBI:149473"/>
        <dbReference type="EC" id="2.8.1.6"/>
    </reaction>
</comment>
<comment type="cofactor">
    <cofactor evidence="1">
        <name>[4Fe-4S] cluster</name>
        <dbReference type="ChEBI" id="CHEBI:49883"/>
    </cofactor>
    <text evidence="1">Binds 1 [4Fe-4S] cluster. The cluster is coordinated with 3 cysteines and an exchangeable S-adenosyl-L-methionine.</text>
</comment>
<comment type="cofactor">
    <cofactor evidence="1">
        <name>[2Fe-2S] cluster</name>
        <dbReference type="ChEBI" id="CHEBI:190135"/>
    </cofactor>
    <text evidence="1">Binds 1 [2Fe-2S] cluster. The cluster is coordinated with 3 cysteines and 1 arginine.</text>
</comment>
<comment type="pathway">
    <text evidence="1">Cofactor biosynthesis; biotin biosynthesis; biotin from 7,8-diaminononanoate: step 2/2.</text>
</comment>
<comment type="subunit">
    <text evidence="1">Homodimer.</text>
</comment>
<comment type="similarity">
    <text evidence="1">Belongs to the radical SAM superfamily. Biotin synthase family.</text>
</comment>
<evidence type="ECO:0000255" key="1">
    <source>
        <dbReference type="HAMAP-Rule" id="MF_01694"/>
    </source>
</evidence>
<evidence type="ECO:0000255" key="2">
    <source>
        <dbReference type="PROSITE-ProRule" id="PRU01266"/>
    </source>
</evidence>
<protein>
    <recommendedName>
        <fullName evidence="1">Biotin synthase</fullName>
        <ecNumber evidence="1">2.8.1.6</ecNumber>
    </recommendedName>
</protein>
<accession>Q0BLD5</accession>
<keyword id="KW-0001">2Fe-2S</keyword>
<keyword id="KW-0004">4Fe-4S</keyword>
<keyword id="KW-0093">Biotin biosynthesis</keyword>
<keyword id="KW-0408">Iron</keyword>
<keyword id="KW-0411">Iron-sulfur</keyword>
<keyword id="KW-0479">Metal-binding</keyword>
<keyword id="KW-0949">S-adenosyl-L-methionine</keyword>
<keyword id="KW-0808">Transferase</keyword>
<name>BIOB_FRATO</name>